<accession>B1LUM8</accession>
<dbReference type="EC" id="7.1.1.-" evidence="1"/>
<dbReference type="EMBL" id="CP001001">
    <property type="protein sequence ID" value="ACB24046.1"/>
    <property type="molecule type" value="Genomic_DNA"/>
</dbReference>
<dbReference type="RefSeq" id="WP_007560744.1">
    <property type="nucleotide sequence ID" value="NC_010505.1"/>
</dbReference>
<dbReference type="SMR" id="B1LUM8"/>
<dbReference type="STRING" id="426355.Mrad2831_2051"/>
<dbReference type="GeneID" id="90831268"/>
<dbReference type="KEGG" id="mrd:Mrad2831_2051"/>
<dbReference type="eggNOG" id="COG1143">
    <property type="taxonomic scope" value="Bacteria"/>
</dbReference>
<dbReference type="HOGENOM" id="CLU_067218_5_1_5"/>
<dbReference type="OrthoDB" id="9808559at2"/>
<dbReference type="Proteomes" id="UP000006589">
    <property type="component" value="Chromosome"/>
</dbReference>
<dbReference type="GO" id="GO:0005886">
    <property type="term" value="C:plasma membrane"/>
    <property type="evidence" value="ECO:0007669"/>
    <property type="project" value="UniProtKB-SubCell"/>
</dbReference>
<dbReference type="GO" id="GO:0051539">
    <property type="term" value="F:4 iron, 4 sulfur cluster binding"/>
    <property type="evidence" value="ECO:0007669"/>
    <property type="project" value="UniProtKB-KW"/>
</dbReference>
<dbReference type="GO" id="GO:0005506">
    <property type="term" value="F:iron ion binding"/>
    <property type="evidence" value="ECO:0007669"/>
    <property type="project" value="UniProtKB-UniRule"/>
</dbReference>
<dbReference type="GO" id="GO:0050136">
    <property type="term" value="F:NADH:ubiquinone reductase (non-electrogenic) activity"/>
    <property type="evidence" value="ECO:0007669"/>
    <property type="project" value="UniProtKB-UniRule"/>
</dbReference>
<dbReference type="GO" id="GO:0048038">
    <property type="term" value="F:quinone binding"/>
    <property type="evidence" value="ECO:0007669"/>
    <property type="project" value="UniProtKB-KW"/>
</dbReference>
<dbReference type="GO" id="GO:0009060">
    <property type="term" value="P:aerobic respiration"/>
    <property type="evidence" value="ECO:0007669"/>
    <property type="project" value="TreeGrafter"/>
</dbReference>
<dbReference type="FunFam" id="3.30.70.3270:FF:000001">
    <property type="entry name" value="NADH-quinone oxidoreductase subunit I 1"/>
    <property type="match status" value="1"/>
</dbReference>
<dbReference type="Gene3D" id="3.30.70.3270">
    <property type="match status" value="1"/>
</dbReference>
<dbReference type="HAMAP" id="MF_01351">
    <property type="entry name" value="NDH1_NuoI"/>
    <property type="match status" value="1"/>
</dbReference>
<dbReference type="InterPro" id="IPR017896">
    <property type="entry name" value="4Fe4S_Fe-S-bd"/>
</dbReference>
<dbReference type="InterPro" id="IPR017900">
    <property type="entry name" value="4Fe4S_Fe_S_CS"/>
</dbReference>
<dbReference type="InterPro" id="IPR010226">
    <property type="entry name" value="NADH_quinone_OxRdtase_chainI"/>
</dbReference>
<dbReference type="NCBIfam" id="TIGR01971">
    <property type="entry name" value="NuoI"/>
    <property type="match status" value="1"/>
</dbReference>
<dbReference type="NCBIfam" id="NF004538">
    <property type="entry name" value="PRK05888.1-4"/>
    <property type="match status" value="1"/>
</dbReference>
<dbReference type="NCBIfam" id="NF004539">
    <property type="entry name" value="PRK05888.1-5"/>
    <property type="match status" value="1"/>
</dbReference>
<dbReference type="PANTHER" id="PTHR10849:SF20">
    <property type="entry name" value="NADH DEHYDROGENASE [UBIQUINONE] IRON-SULFUR PROTEIN 8, MITOCHONDRIAL"/>
    <property type="match status" value="1"/>
</dbReference>
<dbReference type="PANTHER" id="PTHR10849">
    <property type="entry name" value="NADH DEHYDROGENASE UBIQUINONE IRON-SULFUR PROTEIN 8, MITOCHONDRIAL"/>
    <property type="match status" value="1"/>
</dbReference>
<dbReference type="Pfam" id="PF12838">
    <property type="entry name" value="Fer4_7"/>
    <property type="match status" value="1"/>
</dbReference>
<dbReference type="SUPFAM" id="SSF54862">
    <property type="entry name" value="4Fe-4S ferredoxins"/>
    <property type="match status" value="1"/>
</dbReference>
<dbReference type="PROSITE" id="PS00198">
    <property type="entry name" value="4FE4S_FER_1"/>
    <property type="match status" value="2"/>
</dbReference>
<dbReference type="PROSITE" id="PS51379">
    <property type="entry name" value="4FE4S_FER_2"/>
    <property type="match status" value="2"/>
</dbReference>
<comment type="function">
    <text evidence="1">NDH-1 shuttles electrons from NADH, via FMN and iron-sulfur (Fe-S) centers, to quinones in the respiratory chain. The immediate electron acceptor for the enzyme in this species is believed to be ubiquinone. Couples the redox reaction to proton translocation (for every two electrons transferred, four hydrogen ions are translocated across the cytoplasmic membrane), and thus conserves the redox energy in a proton gradient.</text>
</comment>
<comment type="catalytic activity">
    <reaction evidence="1">
        <text>a quinone + NADH + 5 H(+)(in) = a quinol + NAD(+) + 4 H(+)(out)</text>
        <dbReference type="Rhea" id="RHEA:57888"/>
        <dbReference type="ChEBI" id="CHEBI:15378"/>
        <dbReference type="ChEBI" id="CHEBI:24646"/>
        <dbReference type="ChEBI" id="CHEBI:57540"/>
        <dbReference type="ChEBI" id="CHEBI:57945"/>
        <dbReference type="ChEBI" id="CHEBI:132124"/>
    </reaction>
</comment>
<comment type="cofactor">
    <cofactor evidence="1">
        <name>[4Fe-4S] cluster</name>
        <dbReference type="ChEBI" id="CHEBI:49883"/>
    </cofactor>
    <text evidence="1">Binds 2 [4Fe-4S] clusters per subunit.</text>
</comment>
<comment type="subunit">
    <text evidence="1">NDH-1 is composed of 14 different subunits. Subunits NuoA, H, J, K, L, M, N constitute the membrane sector of the complex.</text>
</comment>
<comment type="subcellular location">
    <subcellularLocation>
        <location evidence="1">Cell inner membrane</location>
        <topology evidence="1">Peripheral membrane protein</topology>
    </subcellularLocation>
</comment>
<comment type="similarity">
    <text evidence="1">Belongs to the complex I 23 kDa subunit family.</text>
</comment>
<keyword id="KW-0004">4Fe-4S</keyword>
<keyword id="KW-0997">Cell inner membrane</keyword>
<keyword id="KW-1003">Cell membrane</keyword>
<keyword id="KW-0408">Iron</keyword>
<keyword id="KW-0411">Iron-sulfur</keyword>
<keyword id="KW-0472">Membrane</keyword>
<keyword id="KW-0479">Metal-binding</keyword>
<keyword id="KW-0520">NAD</keyword>
<keyword id="KW-0874">Quinone</keyword>
<keyword id="KW-0677">Repeat</keyword>
<keyword id="KW-1278">Translocase</keyword>
<keyword id="KW-0830">Ubiquinone</keyword>
<sequence>MKLDQVAKSLLLKEFVSGMILGMRYFFKPKATINYPFEMGHRGPRFRGEHALRRYPNGEERCIACKLCEAICPAQAITIEAGPRRNDGTRRTTRYDIDMVKCIYCGMCQEACPVDAIVEGPNFEFSVETREELLYDKQKLLLNGDRWEREIARNIAMDAPYR</sequence>
<feature type="chain" id="PRO_1000143653" description="NADH-quinone oxidoreductase subunit I">
    <location>
        <begin position="1"/>
        <end position="162"/>
    </location>
</feature>
<feature type="domain" description="4Fe-4S ferredoxin-type 1" evidence="1">
    <location>
        <begin position="52"/>
        <end position="82"/>
    </location>
</feature>
<feature type="domain" description="4Fe-4S ferredoxin-type 2" evidence="1">
    <location>
        <begin position="93"/>
        <end position="122"/>
    </location>
</feature>
<feature type="binding site" evidence="1">
    <location>
        <position position="62"/>
    </location>
    <ligand>
        <name>[4Fe-4S] cluster</name>
        <dbReference type="ChEBI" id="CHEBI:49883"/>
        <label>1</label>
    </ligand>
</feature>
<feature type="binding site" evidence="1">
    <location>
        <position position="65"/>
    </location>
    <ligand>
        <name>[4Fe-4S] cluster</name>
        <dbReference type="ChEBI" id="CHEBI:49883"/>
        <label>1</label>
    </ligand>
</feature>
<feature type="binding site" evidence="1">
    <location>
        <position position="68"/>
    </location>
    <ligand>
        <name>[4Fe-4S] cluster</name>
        <dbReference type="ChEBI" id="CHEBI:49883"/>
        <label>1</label>
    </ligand>
</feature>
<feature type="binding site" evidence="1">
    <location>
        <position position="72"/>
    </location>
    <ligand>
        <name>[4Fe-4S] cluster</name>
        <dbReference type="ChEBI" id="CHEBI:49883"/>
        <label>2</label>
    </ligand>
</feature>
<feature type="binding site" evidence="1">
    <location>
        <position position="102"/>
    </location>
    <ligand>
        <name>[4Fe-4S] cluster</name>
        <dbReference type="ChEBI" id="CHEBI:49883"/>
        <label>2</label>
    </ligand>
</feature>
<feature type="binding site" evidence="1">
    <location>
        <position position="105"/>
    </location>
    <ligand>
        <name>[4Fe-4S] cluster</name>
        <dbReference type="ChEBI" id="CHEBI:49883"/>
        <label>2</label>
    </ligand>
</feature>
<feature type="binding site" evidence="1">
    <location>
        <position position="108"/>
    </location>
    <ligand>
        <name>[4Fe-4S] cluster</name>
        <dbReference type="ChEBI" id="CHEBI:49883"/>
        <label>2</label>
    </ligand>
</feature>
<feature type="binding site" evidence="1">
    <location>
        <position position="112"/>
    </location>
    <ligand>
        <name>[4Fe-4S] cluster</name>
        <dbReference type="ChEBI" id="CHEBI:49883"/>
        <label>1</label>
    </ligand>
</feature>
<protein>
    <recommendedName>
        <fullName evidence="1">NADH-quinone oxidoreductase subunit I</fullName>
        <ecNumber evidence="1">7.1.1.-</ecNumber>
    </recommendedName>
    <alternativeName>
        <fullName evidence="1">NADH dehydrogenase I subunit I</fullName>
    </alternativeName>
    <alternativeName>
        <fullName evidence="1">NDH-1 subunit I</fullName>
    </alternativeName>
</protein>
<name>NUOI_METRJ</name>
<proteinExistence type="inferred from homology"/>
<reference key="1">
    <citation type="submission" date="2008-03" db="EMBL/GenBank/DDBJ databases">
        <title>Complete sequence of chromosome of Methylobacterium radiotolerans JCM 2831.</title>
        <authorList>
            <consortium name="US DOE Joint Genome Institute"/>
            <person name="Copeland A."/>
            <person name="Lucas S."/>
            <person name="Lapidus A."/>
            <person name="Glavina del Rio T."/>
            <person name="Dalin E."/>
            <person name="Tice H."/>
            <person name="Bruce D."/>
            <person name="Goodwin L."/>
            <person name="Pitluck S."/>
            <person name="Kiss H."/>
            <person name="Brettin T."/>
            <person name="Detter J.C."/>
            <person name="Han C."/>
            <person name="Kuske C.R."/>
            <person name="Schmutz J."/>
            <person name="Larimer F."/>
            <person name="Land M."/>
            <person name="Hauser L."/>
            <person name="Kyrpides N."/>
            <person name="Mikhailova N."/>
            <person name="Marx C.J."/>
            <person name="Richardson P."/>
        </authorList>
    </citation>
    <scope>NUCLEOTIDE SEQUENCE [LARGE SCALE GENOMIC DNA]</scope>
    <source>
        <strain>ATCC 27329 / DSM 1819 / JCM 2831 / NBRC 15690 / NCIMB 10815 / 0-1</strain>
    </source>
</reference>
<organism>
    <name type="scientific">Methylobacterium radiotolerans (strain ATCC 27329 / DSM 1819 / JCM 2831 / NBRC 15690 / NCIMB 10815 / 0-1)</name>
    <dbReference type="NCBI Taxonomy" id="426355"/>
    <lineage>
        <taxon>Bacteria</taxon>
        <taxon>Pseudomonadati</taxon>
        <taxon>Pseudomonadota</taxon>
        <taxon>Alphaproteobacteria</taxon>
        <taxon>Hyphomicrobiales</taxon>
        <taxon>Methylobacteriaceae</taxon>
        <taxon>Methylobacterium</taxon>
    </lineage>
</organism>
<evidence type="ECO:0000255" key="1">
    <source>
        <dbReference type="HAMAP-Rule" id="MF_01351"/>
    </source>
</evidence>
<gene>
    <name evidence="1" type="primary">nuoI</name>
    <name type="ordered locus">Mrad2831_2051</name>
</gene>